<reference key="1">
    <citation type="journal article" date="2001" name="Nature">
        <title>Genome sequence of enterohaemorrhagic Escherichia coli O157:H7.</title>
        <authorList>
            <person name="Perna N.T."/>
            <person name="Plunkett G. III"/>
            <person name="Burland V."/>
            <person name="Mau B."/>
            <person name="Glasner J.D."/>
            <person name="Rose D.J."/>
            <person name="Mayhew G.F."/>
            <person name="Evans P.S."/>
            <person name="Gregor J."/>
            <person name="Kirkpatrick H.A."/>
            <person name="Posfai G."/>
            <person name="Hackett J."/>
            <person name="Klink S."/>
            <person name="Boutin A."/>
            <person name="Shao Y."/>
            <person name="Miller L."/>
            <person name="Grotbeck E.J."/>
            <person name="Davis N.W."/>
            <person name="Lim A."/>
            <person name="Dimalanta E.T."/>
            <person name="Potamousis K."/>
            <person name="Apodaca J."/>
            <person name="Anantharaman T.S."/>
            <person name="Lin J."/>
            <person name="Yen G."/>
            <person name="Schwartz D.C."/>
            <person name="Welch R.A."/>
            <person name="Blattner F.R."/>
        </authorList>
    </citation>
    <scope>NUCLEOTIDE SEQUENCE [LARGE SCALE GENOMIC DNA]</scope>
    <source>
        <strain>O157:H7 / EDL933 / ATCC 700927 / EHEC</strain>
    </source>
</reference>
<reference key="2">
    <citation type="journal article" date="2001" name="DNA Res.">
        <title>Complete genome sequence of enterohemorrhagic Escherichia coli O157:H7 and genomic comparison with a laboratory strain K-12.</title>
        <authorList>
            <person name="Hayashi T."/>
            <person name="Makino K."/>
            <person name="Ohnishi M."/>
            <person name="Kurokawa K."/>
            <person name="Ishii K."/>
            <person name="Yokoyama K."/>
            <person name="Han C.-G."/>
            <person name="Ohtsubo E."/>
            <person name="Nakayama K."/>
            <person name="Murata T."/>
            <person name="Tanaka M."/>
            <person name="Tobe T."/>
            <person name="Iida T."/>
            <person name="Takami H."/>
            <person name="Honda T."/>
            <person name="Sasakawa C."/>
            <person name="Ogasawara N."/>
            <person name="Yasunaga T."/>
            <person name="Kuhara S."/>
            <person name="Shiba T."/>
            <person name="Hattori M."/>
            <person name="Shinagawa H."/>
        </authorList>
    </citation>
    <scope>NUCLEOTIDE SEQUENCE [LARGE SCALE GENOMIC DNA]</scope>
    <source>
        <strain>O157:H7 / Sakai / RIMD 0509952 / EHEC</strain>
    </source>
</reference>
<gene>
    <name type="primary">ycbJ</name>
    <name type="ordered locus">Z1265</name>
    <name type="ordered locus">ECs1002</name>
</gene>
<proteinExistence type="predicted"/>
<accession>P0AB04</accession>
<accession>P75845</accession>
<accession>Q47327</accession>
<feature type="chain" id="PRO_0000168771" description="Uncharacterized protein YcbJ">
    <location>
        <begin position="1"/>
        <end position="297"/>
    </location>
</feature>
<name>YCBJ_ECO57</name>
<protein>
    <recommendedName>
        <fullName>Uncharacterized protein YcbJ</fullName>
    </recommendedName>
</protein>
<dbReference type="EMBL" id="AE005174">
    <property type="protein sequence ID" value="AAG55404.1"/>
    <property type="molecule type" value="Genomic_DNA"/>
</dbReference>
<dbReference type="EMBL" id="BA000007">
    <property type="protein sequence ID" value="BAB34425.1"/>
    <property type="molecule type" value="Genomic_DNA"/>
</dbReference>
<dbReference type="PIR" id="B90754">
    <property type="entry name" value="B90754"/>
</dbReference>
<dbReference type="PIR" id="H85617">
    <property type="entry name" value="H85617"/>
</dbReference>
<dbReference type="RefSeq" id="NP_309029.1">
    <property type="nucleotide sequence ID" value="NC_002695.1"/>
</dbReference>
<dbReference type="RefSeq" id="WP_000436922.1">
    <property type="nucleotide sequence ID" value="NZ_VOAI01000006.1"/>
</dbReference>
<dbReference type="SMR" id="P0AB04"/>
<dbReference type="STRING" id="155864.Z1265"/>
<dbReference type="GeneID" id="917745"/>
<dbReference type="KEGG" id="ece:Z1265"/>
<dbReference type="KEGG" id="ecs:ECs_1002"/>
<dbReference type="PATRIC" id="fig|386585.9.peg.1122"/>
<dbReference type="eggNOG" id="COG3173">
    <property type="taxonomic scope" value="Bacteria"/>
</dbReference>
<dbReference type="HOGENOM" id="CLU_080412_0_0_6"/>
<dbReference type="OMA" id="WYQQRVE"/>
<dbReference type="Proteomes" id="UP000000558">
    <property type="component" value="Chromosome"/>
</dbReference>
<dbReference type="Proteomes" id="UP000002519">
    <property type="component" value="Chromosome"/>
</dbReference>
<dbReference type="InterPro" id="IPR002575">
    <property type="entry name" value="Aminoglycoside_PTrfase"/>
</dbReference>
<dbReference type="InterPro" id="IPR011009">
    <property type="entry name" value="Kinase-like_dom_sf"/>
</dbReference>
<dbReference type="NCBIfam" id="NF007890">
    <property type="entry name" value="PRK10593.1"/>
    <property type="match status" value="1"/>
</dbReference>
<dbReference type="Pfam" id="PF01636">
    <property type="entry name" value="APH"/>
    <property type="match status" value="1"/>
</dbReference>
<dbReference type="SUPFAM" id="SSF56112">
    <property type="entry name" value="Protein kinase-like (PK-like)"/>
    <property type="match status" value="1"/>
</dbReference>
<keyword id="KW-1185">Reference proteome</keyword>
<organism>
    <name type="scientific">Escherichia coli O157:H7</name>
    <dbReference type="NCBI Taxonomy" id="83334"/>
    <lineage>
        <taxon>Bacteria</taxon>
        <taxon>Pseudomonadati</taxon>
        <taxon>Pseudomonadota</taxon>
        <taxon>Gammaproteobacteria</taxon>
        <taxon>Enterobacterales</taxon>
        <taxon>Enterobacteriaceae</taxon>
        <taxon>Escherichia</taxon>
    </lineage>
</organism>
<sequence length="297" mass="34488">MEQLRAELSHLLGEKLSRIECVNEKADTALWALYDSQGNPMPLMARSFSTPGKARQLAWKTTMLARSGTVRMPTIYGVMTHEEHPGPDVLLLERMRGVSVEAPARTPERWEQLKDQIVEALLAWHRQDSRGCVGAVDNTQENFWPSWYRQHVEVLWTTLNQFNNTGLTMQDKRILFRTRECLPALFEGFNDNCVLIHGNFCLRSMLKDSRSDQLLAMVGPGLMLWAPREYELFRLMDNSLAEDLLWSYLQRAPVAESFIWRRWLYVLWDEVAQLVNTGRFSRRNFDLASKSLLPWLA</sequence>